<dbReference type="EC" id="7.1.2.2" evidence="1"/>
<dbReference type="EMBL" id="CP000142">
    <property type="protein sequence ID" value="ABA90368.1"/>
    <property type="molecule type" value="Genomic_DNA"/>
</dbReference>
<dbReference type="EMBL" id="CP000142">
    <property type="protein sequence ID" value="ABA88200.1"/>
    <property type="molecule type" value="Genomic_DNA"/>
</dbReference>
<dbReference type="RefSeq" id="WP_011340671.1">
    <property type="nucleotide sequence ID" value="NC_007498.2"/>
</dbReference>
<dbReference type="SMR" id="Q39ZT9"/>
<dbReference type="STRING" id="338963.Pcar_0947"/>
<dbReference type="KEGG" id="pca:Pcar_0947"/>
<dbReference type="KEGG" id="pca:Pcar_3133"/>
<dbReference type="eggNOG" id="COG0056">
    <property type="taxonomic scope" value="Bacteria"/>
</dbReference>
<dbReference type="HOGENOM" id="CLU_010091_2_1_7"/>
<dbReference type="OrthoDB" id="9803053at2"/>
<dbReference type="Proteomes" id="UP000002534">
    <property type="component" value="Chromosome"/>
</dbReference>
<dbReference type="GO" id="GO:0005886">
    <property type="term" value="C:plasma membrane"/>
    <property type="evidence" value="ECO:0007669"/>
    <property type="project" value="UniProtKB-SubCell"/>
</dbReference>
<dbReference type="GO" id="GO:0045259">
    <property type="term" value="C:proton-transporting ATP synthase complex"/>
    <property type="evidence" value="ECO:0007669"/>
    <property type="project" value="UniProtKB-KW"/>
</dbReference>
<dbReference type="GO" id="GO:0043531">
    <property type="term" value="F:ADP binding"/>
    <property type="evidence" value="ECO:0007669"/>
    <property type="project" value="TreeGrafter"/>
</dbReference>
<dbReference type="GO" id="GO:0005524">
    <property type="term" value="F:ATP binding"/>
    <property type="evidence" value="ECO:0007669"/>
    <property type="project" value="UniProtKB-UniRule"/>
</dbReference>
<dbReference type="GO" id="GO:0046933">
    <property type="term" value="F:proton-transporting ATP synthase activity, rotational mechanism"/>
    <property type="evidence" value="ECO:0007669"/>
    <property type="project" value="UniProtKB-UniRule"/>
</dbReference>
<dbReference type="CDD" id="cd18113">
    <property type="entry name" value="ATP-synt_F1_alpha_C"/>
    <property type="match status" value="1"/>
</dbReference>
<dbReference type="CDD" id="cd18116">
    <property type="entry name" value="ATP-synt_F1_alpha_N"/>
    <property type="match status" value="1"/>
</dbReference>
<dbReference type="CDD" id="cd01132">
    <property type="entry name" value="F1-ATPase_alpha_CD"/>
    <property type="match status" value="1"/>
</dbReference>
<dbReference type="FunFam" id="1.20.150.20:FF:000001">
    <property type="entry name" value="ATP synthase subunit alpha"/>
    <property type="match status" value="1"/>
</dbReference>
<dbReference type="FunFam" id="2.40.30.20:FF:000001">
    <property type="entry name" value="ATP synthase subunit alpha"/>
    <property type="match status" value="1"/>
</dbReference>
<dbReference type="FunFam" id="3.40.50.300:FF:000002">
    <property type="entry name" value="ATP synthase subunit alpha"/>
    <property type="match status" value="1"/>
</dbReference>
<dbReference type="Gene3D" id="2.40.30.20">
    <property type="match status" value="1"/>
</dbReference>
<dbReference type="Gene3D" id="1.20.150.20">
    <property type="entry name" value="ATP synthase alpha/beta chain, C-terminal domain"/>
    <property type="match status" value="1"/>
</dbReference>
<dbReference type="Gene3D" id="3.40.50.300">
    <property type="entry name" value="P-loop containing nucleotide triphosphate hydrolases"/>
    <property type="match status" value="1"/>
</dbReference>
<dbReference type="HAMAP" id="MF_01346">
    <property type="entry name" value="ATP_synth_alpha_bact"/>
    <property type="match status" value="1"/>
</dbReference>
<dbReference type="InterPro" id="IPR023366">
    <property type="entry name" value="ATP_synth_asu-like_sf"/>
</dbReference>
<dbReference type="InterPro" id="IPR000793">
    <property type="entry name" value="ATP_synth_asu_C"/>
</dbReference>
<dbReference type="InterPro" id="IPR038376">
    <property type="entry name" value="ATP_synth_asu_C_sf"/>
</dbReference>
<dbReference type="InterPro" id="IPR033732">
    <property type="entry name" value="ATP_synth_F1_a_nt-bd_dom"/>
</dbReference>
<dbReference type="InterPro" id="IPR005294">
    <property type="entry name" value="ATP_synth_F1_asu"/>
</dbReference>
<dbReference type="InterPro" id="IPR020003">
    <property type="entry name" value="ATPase_a/bsu_AS"/>
</dbReference>
<dbReference type="InterPro" id="IPR004100">
    <property type="entry name" value="ATPase_F1/V1/A1_a/bsu_N"/>
</dbReference>
<dbReference type="InterPro" id="IPR036121">
    <property type="entry name" value="ATPase_F1/V1/A1_a/bsu_N_sf"/>
</dbReference>
<dbReference type="InterPro" id="IPR000194">
    <property type="entry name" value="ATPase_F1/V1/A1_a/bsu_nucl-bd"/>
</dbReference>
<dbReference type="InterPro" id="IPR027417">
    <property type="entry name" value="P-loop_NTPase"/>
</dbReference>
<dbReference type="NCBIfam" id="TIGR00962">
    <property type="entry name" value="atpA"/>
    <property type="match status" value="1"/>
</dbReference>
<dbReference type="NCBIfam" id="NF009884">
    <property type="entry name" value="PRK13343.1"/>
    <property type="match status" value="1"/>
</dbReference>
<dbReference type="PANTHER" id="PTHR48082">
    <property type="entry name" value="ATP SYNTHASE SUBUNIT ALPHA, MITOCHONDRIAL"/>
    <property type="match status" value="1"/>
</dbReference>
<dbReference type="PANTHER" id="PTHR48082:SF2">
    <property type="entry name" value="ATP SYNTHASE SUBUNIT ALPHA, MITOCHONDRIAL"/>
    <property type="match status" value="1"/>
</dbReference>
<dbReference type="Pfam" id="PF00006">
    <property type="entry name" value="ATP-synt_ab"/>
    <property type="match status" value="1"/>
</dbReference>
<dbReference type="Pfam" id="PF00306">
    <property type="entry name" value="ATP-synt_ab_C"/>
    <property type="match status" value="1"/>
</dbReference>
<dbReference type="Pfam" id="PF02874">
    <property type="entry name" value="ATP-synt_ab_N"/>
    <property type="match status" value="1"/>
</dbReference>
<dbReference type="PIRSF" id="PIRSF039088">
    <property type="entry name" value="F_ATPase_subunit_alpha"/>
    <property type="match status" value="1"/>
</dbReference>
<dbReference type="SUPFAM" id="SSF47917">
    <property type="entry name" value="C-terminal domain of alpha and beta subunits of F1 ATP synthase"/>
    <property type="match status" value="1"/>
</dbReference>
<dbReference type="SUPFAM" id="SSF50615">
    <property type="entry name" value="N-terminal domain of alpha and beta subunits of F1 ATP synthase"/>
    <property type="match status" value="1"/>
</dbReference>
<dbReference type="SUPFAM" id="SSF52540">
    <property type="entry name" value="P-loop containing nucleoside triphosphate hydrolases"/>
    <property type="match status" value="1"/>
</dbReference>
<dbReference type="PROSITE" id="PS00152">
    <property type="entry name" value="ATPASE_ALPHA_BETA"/>
    <property type="match status" value="1"/>
</dbReference>
<sequence>MDIKAEEICAIIEQQIENFDREIEISEMGTIISVGDGIARIHGLNRAMAGELLEFPGDVIGMVLNLEEDNVGAAILGDTHHIKEGDSVRRTGRIVEVPVGEALIGRVVNGIGQPIDGGGALEGAEARQVEIKAPGIVTRKSVHQPVQTGLKAIDALVPIGRGQRELIIGDRQTGKTALAIDAIINQKGQDMVCIYVAIGQKQSTVAQVVDKLKQHGAMDYTIVVSAGASEPAPLQFIAPYAGVTMGEYFRDNGRHALIVYDDLSKHAVAYRQLSLLLRRPPGREAFPGDVFYLHSRLLERAAKLNDELGGGSLTALPIIETQAGDLSSYIPTNVISITDGQIFLEADLFYSGVRPAINVGLSVSRVGGSAQVKAMKQVAGTLRLSLAQYREMAAFAQFGSDLDAATQKQLARGARLVEILKQPQYQPLPVEKQILVIYAANNGYVDDYPLTVLRRYEEELYSFLEHRHGDLLKDLAEKKAIDTDLEARIKAVLAAFGEQFTP</sequence>
<evidence type="ECO:0000255" key="1">
    <source>
        <dbReference type="HAMAP-Rule" id="MF_01346"/>
    </source>
</evidence>
<accession>Q39ZT9</accession>
<keyword id="KW-0066">ATP synthesis</keyword>
<keyword id="KW-0067">ATP-binding</keyword>
<keyword id="KW-0997">Cell inner membrane</keyword>
<keyword id="KW-1003">Cell membrane</keyword>
<keyword id="KW-0139">CF(1)</keyword>
<keyword id="KW-0375">Hydrogen ion transport</keyword>
<keyword id="KW-0406">Ion transport</keyword>
<keyword id="KW-0472">Membrane</keyword>
<keyword id="KW-0547">Nucleotide-binding</keyword>
<keyword id="KW-1185">Reference proteome</keyword>
<keyword id="KW-1278">Translocase</keyword>
<keyword id="KW-0813">Transport</keyword>
<gene>
    <name evidence="1" type="primary">atpA1</name>
    <name type="ordered locus">Pcar_0947</name>
</gene>
<gene>
    <name evidence="1" type="primary">atpA3</name>
    <name type="ordered locus">Pcar_3133</name>
</gene>
<reference key="1">
    <citation type="submission" date="2005-10" db="EMBL/GenBank/DDBJ databases">
        <title>Complete sequence of Pelobacter carbinolicus DSM 2380.</title>
        <authorList>
            <person name="Copeland A."/>
            <person name="Lucas S."/>
            <person name="Lapidus A."/>
            <person name="Barry K."/>
            <person name="Detter J.C."/>
            <person name="Glavina T."/>
            <person name="Hammon N."/>
            <person name="Israni S."/>
            <person name="Pitluck S."/>
            <person name="Chertkov O."/>
            <person name="Schmutz J."/>
            <person name="Larimer F."/>
            <person name="Land M."/>
            <person name="Kyrpides N."/>
            <person name="Ivanova N."/>
            <person name="Richardson P."/>
        </authorList>
    </citation>
    <scope>NUCLEOTIDE SEQUENCE [LARGE SCALE GENOMIC DNA]</scope>
    <source>
        <strain>DSM 2380 / NBRC 103641 / GraBd1</strain>
    </source>
</reference>
<name>ATPA1_SYNC1</name>
<feature type="chain" id="PRO_0000238313" description="ATP synthase subunit alpha 1/3">
    <location>
        <begin position="1"/>
        <end position="502"/>
    </location>
</feature>
<feature type="binding site" evidence="1">
    <location>
        <begin position="169"/>
        <end position="176"/>
    </location>
    <ligand>
        <name>ATP</name>
        <dbReference type="ChEBI" id="CHEBI:30616"/>
    </ligand>
</feature>
<feature type="site" description="Required for activity" evidence="1">
    <location>
        <position position="362"/>
    </location>
</feature>
<protein>
    <recommendedName>
        <fullName evidence="1">ATP synthase subunit alpha 1/3</fullName>
        <ecNumber evidence="1">7.1.2.2</ecNumber>
    </recommendedName>
    <alternativeName>
        <fullName evidence="1">ATP synthase F1 sector subunit alpha 1/3</fullName>
    </alternativeName>
    <alternativeName>
        <fullName evidence="1">F-ATPase subunit alpha 1/3</fullName>
    </alternativeName>
</protein>
<comment type="function">
    <text evidence="1">Produces ATP from ADP in the presence of a proton gradient across the membrane. The alpha chain is a regulatory subunit.</text>
</comment>
<comment type="catalytic activity">
    <reaction evidence="1">
        <text>ATP + H2O + 4 H(+)(in) = ADP + phosphate + 5 H(+)(out)</text>
        <dbReference type="Rhea" id="RHEA:57720"/>
        <dbReference type="ChEBI" id="CHEBI:15377"/>
        <dbReference type="ChEBI" id="CHEBI:15378"/>
        <dbReference type="ChEBI" id="CHEBI:30616"/>
        <dbReference type="ChEBI" id="CHEBI:43474"/>
        <dbReference type="ChEBI" id="CHEBI:456216"/>
        <dbReference type="EC" id="7.1.2.2"/>
    </reaction>
</comment>
<comment type="subunit">
    <text evidence="1">F-type ATPases have 2 components, CF(1) - the catalytic core - and CF(0) - the membrane proton channel. CF(1) has five subunits: alpha(3), beta(3), gamma(1), delta(1), epsilon(1). CF(0) has three main subunits: a(1), b(2) and c(9-12). The alpha and beta chains form an alternating ring which encloses part of the gamma chain. CF(1) is attached to CF(0) by a central stalk formed by the gamma and epsilon chains, while a peripheral stalk is formed by the delta and b chains.</text>
</comment>
<comment type="subcellular location">
    <subcellularLocation>
        <location evidence="1">Cell inner membrane</location>
        <topology evidence="1">Peripheral membrane protein</topology>
    </subcellularLocation>
</comment>
<comment type="similarity">
    <text evidence="1">Belongs to the ATPase alpha/beta chains family.</text>
</comment>
<proteinExistence type="inferred from homology"/>
<organism>
    <name type="scientific">Syntrophotalea carbinolica (strain DSM 2380 / NBRC 103641 / GraBd1)</name>
    <name type="common">Pelobacter carbinolicus</name>
    <dbReference type="NCBI Taxonomy" id="338963"/>
    <lineage>
        <taxon>Bacteria</taxon>
        <taxon>Pseudomonadati</taxon>
        <taxon>Thermodesulfobacteriota</taxon>
        <taxon>Desulfuromonadia</taxon>
        <taxon>Desulfuromonadales</taxon>
        <taxon>Syntrophotaleaceae</taxon>
        <taxon>Syntrophotalea</taxon>
    </lineage>
</organism>